<comment type="function">
    <text evidence="1">Catalyzes the oxidation of 5,10-methylenetetrahydrofolate to 5,10-methenyltetrahydrofolate and then the hydrolysis of 5,10-methenyltetrahydrofolate to 10-formyltetrahydrofolate.</text>
</comment>
<comment type="catalytic activity">
    <reaction evidence="1">
        <text>(6R)-5,10-methylene-5,6,7,8-tetrahydrofolate + NADP(+) = (6R)-5,10-methenyltetrahydrofolate + NADPH</text>
        <dbReference type="Rhea" id="RHEA:22812"/>
        <dbReference type="ChEBI" id="CHEBI:15636"/>
        <dbReference type="ChEBI" id="CHEBI:57455"/>
        <dbReference type="ChEBI" id="CHEBI:57783"/>
        <dbReference type="ChEBI" id="CHEBI:58349"/>
        <dbReference type="EC" id="1.5.1.5"/>
    </reaction>
</comment>
<comment type="catalytic activity">
    <reaction evidence="1">
        <text>(6R)-5,10-methenyltetrahydrofolate + H2O = (6R)-10-formyltetrahydrofolate + H(+)</text>
        <dbReference type="Rhea" id="RHEA:23700"/>
        <dbReference type="ChEBI" id="CHEBI:15377"/>
        <dbReference type="ChEBI" id="CHEBI:15378"/>
        <dbReference type="ChEBI" id="CHEBI:57455"/>
        <dbReference type="ChEBI" id="CHEBI:195366"/>
        <dbReference type="EC" id="3.5.4.9"/>
    </reaction>
</comment>
<comment type="pathway">
    <text evidence="1">One-carbon metabolism; tetrahydrofolate interconversion.</text>
</comment>
<comment type="subunit">
    <text evidence="1">Homodimer.</text>
</comment>
<comment type="similarity">
    <text evidence="1">Belongs to the tetrahydrofolate dehydrogenase/cyclohydrolase family.</text>
</comment>
<name>FOLD_METMA</name>
<organism>
    <name type="scientific">Methanosarcina mazei (strain ATCC BAA-159 / DSM 3647 / Goe1 / Go1 / JCM 11833 / OCM 88)</name>
    <name type="common">Methanosarcina frisia</name>
    <dbReference type="NCBI Taxonomy" id="192952"/>
    <lineage>
        <taxon>Archaea</taxon>
        <taxon>Methanobacteriati</taxon>
        <taxon>Methanobacteriota</taxon>
        <taxon>Stenosarchaea group</taxon>
        <taxon>Methanomicrobia</taxon>
        <taxon>Methanosarcinales</taxon>
        <taxon>Methanosarcinaceae</taxon>
        <taxon>Methanosarcina</taxon>
    </lineage>
</organism>
<feature type="chain" id="PRO_0000268585" description="Bifunctional protein FolD">
    <location>
        <begin position="1"/>
        <end position="287"/>
    </location>
</feature>
<feature type="binding site" evidence="1">
    <location>
        <begin position="171"/>
        <end position="173"/>
    </location>
    <ligand>
        <name>NADP(+)</name>
        <dbReference type="ChEBI" id="CHEBI:58349"/>
    </ligand>
</feature>
<feature type="binding site" evidence="1">
    <location>
        <position position="196"/>
    </location>
    <ligand>
        <name>NADP(+)</name>
        <dbReference type="ChEBI" id="CHEBI:58349"/>
    </ligand>
</feature>
<feature type="binding site" evidence="1">
    <location>
        <position position="237"/>
    </location>
    <ligand>
        <name>NADP(+)</name>
        <dbReference type="ChEBI" id="CHEBI:58349"/>
    </ligand>
</feature>
<protein>
    <recommendedName>
        <fullName evidence="1">Bifunctional protein FolD</fullName>
    </recommendedName>
    <domain>
        <recommendedName>
            <fullName evidence="1">Methylenetetrahydrofolate dehydrogenase</fullName>
            <ecNumber evidence="1">1.5.1.5</ecNumber>
        </recommendedName>
    </domain>
    <domain>
        <recommendedName>
            <fullName evidence="1">Methenyltetrahydrofolate cyclohydrolase</fullName>
            <ecNumber evidence="1">3.5.4.9</ecNumber>
        </recommendedName>
    </domain>
</protein>
<evidence type="ECO:0000255" key="1">
    <source>
        <dbReference type="HAMAP-Rule" id="MF_01576"/>
    </source>
</evidence>
<accession>Q8PZQ1</accession>
<sequence>MLDESYESRIIDGKVLAQQVEEEVRSGVEDLESNRGITPGLATILVGDDPASKMYVRLKHRACERVGIRAEDFLLPADSTQEELLALIDSLNNNKDVHGILLQLPLPEHFSPQEAMEAISPAKDADGFHPYNMGKLMIGDEGLVPCTPHGVIRALEEYNVPVKGKNAVIVGHSNVVGKPMAAMLLNRNASVSVCHIFTDDLKKYTLGADILVVAAGVKHLIKADMVKEGAVIFDVGITKEEDGVYGDVDFENVIKKASLITPVPGGVGPLTVAMLMKHVLMCAEKSL</sequence>
<reference key="1">
    <citation type="journal article" date="2002" name="J. Mol. Microbiol. Biotechnol.">
        <title>The genome of Methanosarcina mazei: evidence for lateral gene transfer between Bacteria and Archaea.</title>
        <authorList>
            <person name="Deppenmeier U."/>
            <person name="Johann A."/>
            <person name="Hartsch T."/>
            <person name="Merkl R."/>
            <person name="Schmitz R.A."/>
            <person name="Martinez-Arias R."/>
            <person name="Henne A."/>
            <person name="Wiezer A."/>
            <person name="Baeumer S."/>
            <person name="Jacobi C."/>
            <person name="Brueggemann H."/>
            <person name="Lienard T."/>
            <person name="Christmann A."/>
            <person name="Boemecke M."/>
            <person name="Steckel S."/>
            <person name="Bhattacharyya A."/>
            <person name="Lykidis A."/>
            <person name="Overbeek R."/>
            <person name="Klenk H.-P."/>
            <person name="Gunsalus R.P."/>
            <person name="Fritz H.-J."/>
            <person name="Gottschalk G."/>
        </authorList>
    </citation>
    <scope>NUCLEOTIDE SEQUENCE [LARGE SCALE GENOMIC DNA]</scope>
    <source>
        <strain>ATCC BAA-159 / DSM 3647 / Goe1 / Go1 / JCM 11833 / OCM 88</strain>
    </source>
</reference>
<keyword id="KW-0028">Amino-acid biosynthesis</keyword>
<keyword id="KW-0368">Histidine biosynthesis</keyword>
<keyword id="KW-0378">Hydrolase</keyword>
<keyword id="KW-0486">Methionine biosynthesis</keyword>
<keyword id="KW-0511">Multifunctional enzyme</keyword>
<keyword id="KW-0521">NADP</keyword>
<keyword id="KW-0554">One-carbon metabolism</keyword>
<keyword id="KW-0560">Oxidoreductase</keyword>
<keyword id="KW-0658">Purine biosynthesis</keyword>
<proteinExistence type="inferred from homology"/>
<gene>
    <name evidence="1" type="primary">folD</name>
    <name type="ordered locus">MM_0441</name>
</gene>
<dbReference type="EC" id="1.5.1.5" evidence="1"/>
<dbReference type="EC" id="3.5.4.9" evidence="1"/>
<dbReference type="EMBL" id="AE008384">
    <property type="protein sequence ID" value="AAM30137.1"/>
    <property type="molecule type" value="Genomic_DNA"/>
</dbReference>
<dbReference type="RefSeq" id="WP_011032394.1">
    <property type="nucleotide sequence ID" value="NC_003901.1"/>
</dbReference>
<dbReference type="SMR" id="Q8PZQ1"/>
<dbReference type="KEGG" id="mma:MM_0441"/>
<dbReference type="PATRIC" id="fig|192952.21.peg.531"/>
<dbReference type="eggNOG" id="arCOG04538">
    <property type="taxonomic scope" value="Archaea"/>
</dbReference>
<dbReference type="HOGENOM" id="CLU_034045_2_1_2"/>
<dbReference type="UniPathway" id="UPA00193"/>
<dbReference type="Proteomes" id="UP000000595">
    <property type="component" value="Chromosome"/>
</dbReference>
<dbReference type="GO" id="GO:0005829">
    <property type="term" value="C:cytosol"/>
    <property type="evidence" value="ECO:0007669"/>
    <property type="project" value="TreeGrafter"/>
</dbReference>
<dbReference type="GO" id="GO:0004477">
    <property type="term" value="F:methenyltetrahydrofolate cyclohydrolase activity"/>
    <property type="evidence" value="ECO:0007669"/>
    <property type="project" value="UniProtKB-UniRule"/>
</dbReference>
<dbReference type="GO" id="GO:0004488">
    <property type="term" value="F:methylenetetrahydrofolate dehydrogenase (NADP+) activity"/>
    <property type="evidence" value="ECO:0007669"/>
    <property type="project" value="UniProtKB-UniRule"/>
</dbReference>
<dbReference type="GO" id="GO:0000105">
    <property type="term" value="P:L-histidine biosynthetic process"/>
    <property type="evidence" value="ECO:0007669"/>
    <property type="project" value="UniProtKB-KW"/>
</dbReference>
<dbReference type="GO" id="GO:0009086">
    <property type="term" value="P:methionine biosynthetic process"/>
    <property type="evidence" value="ECO:0007669"/>
    <property type="project" value="UniProtKB-KW"/>
</dbReference>
<dbReference type="GO" id="GO:0006164">
    <property type="term" value="P:purine nucleotide biosynthetic process"/>
    <property type="evidence" value="ECO:0007669"/>
    <property type="project" value="UniProtKB-KW"/>
</dbReference>
<dbReference type="GO" id="GO:0035999">
    <property type="term" value="P:tetrahydrofolate interconversion"/>
    <property type="evidence" value="ECO:0007669"/>
    <property type="project" value="UniProtKB-UniRule"/>
</dbReference>
<dbReference type="CDD" id="cd01080">
    <property type="entry name" value="NAD_bind_m-THF_DH_Cyclohyd"/>
    <property type="match status" value="1"/>
</dbReference>
<dbReference type="FunFam" id="3.40.50.720:FF:000094">
    <property type="entry name" value="Bifunctional protein FolD"/>
    <property type="match status" value="1"/>
</dbReference>
<dbReference type="FunFam" id="3.40.50.10860:FF:000005">
    <property type="entry name" value="C-1-tetrahydrofolate synthase, cytoplasmic, putative"/>
    <property type="match status" value="1"/>
</dbReference>
<dbReference type="Gene3D" id="3.40.50.10860">
    <property type="entry name" value="Leucine Dehydrogenase, chain A, domain 1"/>
    <property type="match status" value="1"/>
</dbReference>
<dbReference type="Gene3D" id="3.40.50.720">
    <property type="entry name" value="NAD(P)-binding Rossmann-like Domain"/>
    <property type="match status" value="1"/>
</dbReference>
<dbReference type="HAMAP" id="MF_01576">
    <property type="entry name" value="THF_DHG_CYH"/>
    <property type="match status" value="1"/>
</dbReference>
<dbReference type="InterPro" id="IPR046346">
    <property type="entry name" value="Aminoacid_DH-like_N_sf"/>
</dbReference>
<dbReference type="InterPro" id="IPR036291">
    <property type="entry name" value="NAD(P)-bd_dom_sf"/>
</dbReference>
<dbReference type="InterPro" id="IPR000672">
    <property type="entry name" value="THF_DH/CycHdrlase"/>
</dbReference>
<dbReference type="InterPro" id="IPR020630">
    <property type="entry name" value="THF_DH/CycHdrlase_cat_dom"/>
</dbReference>
<dbReference type="InterPro" id="IPR020867">
    <property type="entry name" value="THF_DH/CycHdrlase_CS"/>
</dbReference>
<dbReference type="InterPro" id="IPR020631">
    <property type="entry name" value="THF_DH/CycHdrlase_NAD-bd_dom"/>
</dbReference>
<dbReference type="NCBIfam" id="NF010773">
    <property type="entry name" value="PRK14176.1"/>
    <property type="match status" value="1"/>
</dbReference>
<dbReference type="PANTHER" id="PTHR48099:SF5">
    <property type="entry name" value="C-1-TETRAHYDROFOLATE SYNTHASE, CYTOPLASMIC"/>
    <property type="match status" value="1"/>
</dbReference>
<dbReference type="PANTHER" id="PTHR48099">
    <property type="entry name" value="C-1-TETRAHYDROFOLATE SYNTHASE, CYTOPLASMIC-RELATED"/>
    <property type="match status" value="1"/>
</dbReference>
<dbReference type="Pfam" id="PF00763">
    <property type="entry name" value="THF_DHG_CYH"/>
    <property type="match status" value="1"/>
</dbReference>
<dbReference type="Pfam" id="PF02882">
    <property type="entry name" value="THF_DHG_CYH_C"/>
    <property type="match status" value="1"/>
</dbReference>
<dbReference type="PRINTS" id="PR00085">
    <property type="entry name" value="THFDHDRGNASE"/>
</dbReference>
<dbReference type="SUPFAM" id="SSF53223">
    <property type="entry name" value="Aminoacid dehydrogenase-like, N-terminal domain"/>
    <property type="match status" value="1"/>
</dbReference>
<dbReference type="SUPFAM" id="SSF51735">
    <property type="entry name" value="NAD(P)-binding Rossmann-fold domains"/>
    <property type="match status" value="1"/>
</dbReference>
<dbReference type="PROSITE" id="PS00766">
    <property type="entry name" value="THF_DHG_CYH_1"/>
    <property type="match status" value="1"/>
</dbReference>